<comment type="function">
    <text evidence="3">Glucosyltransferase involved in steroid saponin biosynthesis (PubMed:15821879). Catalyzes the 3-O-glucosylation of steroidal sapogenins, such as diosgenin, nuatigenin and tigogenin (PubMed:15821879). Can glucosylate steroidal alkaloids, such as solanidine, solasodine and tomatidine (PubMed:15821879).</text>
</comment>
<comment type="catalytic activity">
    <reaction evidence="3">
        <text>nuatigenin + UDP-alpha-D-glucose = nuatigenin 3-beta-D-glucopyranoside + UDP + H(+)</text>
        <dbReference type="Rhea" id="RHEA:19329"/>
        <dbReference type="ChEBI" id="CHEBI:15378"/>
        <dbReference type="ChEBI" id="CHEBI:15574"/>
        <dbReference type="ChEBI" id="CHEBI:15575"/>
        <dbReference type="ChEBI" id="CHEBI:58223"/>
        <dbReference type="ChEBI" id="CHEBI:58885"/>
        <dbReference type="EC" id="2.4.1.192"/>
    </reaction>
    <physiologicalReaction direction="left-to-right" evidence="3">
        <dbReference type="Rhea" id="RHEA:19330"/>
    </physiologicalReaction>
</comment>
<comment type="catalytic activity">
    <reaction evidence="3">
        <text>diosgenin + UDP-alpha-D-glucose = diosgenin 3-O-beta-D-glucoside + UDP + H(+)</text>
        <dbReference type="Rhea" id="RHEA:61888"/>
        <dbReference type="ChEBI" id="CHEBI:4629"/>
        <dbReference type="ChEBI" id="CHEBI:15378"/>
        <dbReference type="ChEBI" id="CHEBI:58223"/>
        <dbReference type="ChEBI" id="CHEBI:58885"/>
        <dbReference type="ChEBI" id="CHEBI:74020"/>
    </reaction>
    <physiologicalReaction direction="left-to-right" evidence="3">
        <dbReference type="Rhea" id="RHEA:61889"/>
    </physiologicalReaction>
</comment>
<comment type="catalytic activity">
    <reaction evidence="3">
        <text>tigogenin + UDP-alpha-D-glucose = tigogenin 3-O-beta-D-glucopyranoside + UDP + H(+)</text>
        <dbReference type="Rhea" id="RHEA:66276"/>
        <dbReference type="ChEBI" id="CHEBI:9595"/>
        <dbReference type="ChEBI" id="CHEBI:15378"/>
        <dbReference type="ChEBI" id="CHEBI:58223"/>
        <dbReference type="ChEBI" id="CHEBI:58885"/>
        <dbReference type="ChEBI" id="CHEBI:166995"/>
    </reaction>
    <physiologicalReaction direction="left-to-right" evidence="3">
        <dbReference type="Rhea" id="RHEA:66277"/>
    </physiologicalReaction>
</comment>
<comment type="catalytic activity">
    <reaction evidence="3">
        <text>solasodine + UDP-alpha-D-glucose = solasodine 3-beta-D-glucoside + UDP + H(+)</text>
        <dbReference type="Rhea" id="RHEA:61844"/>
        <dbReference type="ChEBI" id="CHEBI:15378"/>
        <dbReference type="ChEBI" id="CHEBI:58223"/>
        <dbReference type="ChEBI" id="CHEBI:58885"/>
        <dbReference type="ChEBI" id="CHEBI:145042"/>
        <dbReference type="ChEBI" id="CHEBI:145043"/>
    </reaction>
    <physiologicalReaction direction="left-to-right" evidence="3">
        <dbReference type="Rhea" id="RHEA:61845"/>
    </physiologicalReaction>
</comment>
<comment type="catalytic activity">
    <reaction evidence="3">
        <text>solanidine + UDP-alpha-D-glucose = solanidine 3-O-beta-D-glucopyranoside + UDP + H(+)</text>
        <dbReference type="Rhea" id="RHEA:66280"/>
        <dbReference type="ChEBI" id="CHEBI:15378"/>
        <dbReference type="ChEBI" id="CHEBI:58223"/>
        <dbReference type="ChEBI" id="CHEBI:58885"/>
        <dbReference type="ChEBI" id="CHEBI:166996"/>
        <dbReference type="ChEBI" id="CHEBI:166997"/>
    </reaction>
    <physiologicalReaction direction="left-to-right" evidence="3">
        <dbReference type="Rhea" id="RHEA:66281"/>
    </physiologicalReaction>
</comment>
<comment type="catalytic activity">
    <reaction evidence="3">
        <text>tomatidine + UDP-alpha-D-glucose = tomatidine 3-O-beta-D-glucopyranoside + UDP + H(+)</text>
        <dbReference type="Rhea" id="RHEA:66284"/>
        <dbReference type="ChEBI" id="CHEBI:15378"/>
        <dbReference type="ChEBI" id="CHEBI:58223"/>
        <dbReference type="ChEBI" id="CHEBI:58885"/>
        <dbReference type="ChEBI" id="CHEBI:166998"/>
        <dbReference type="ChEBI" id="CHEBI:166999"/>
    </reaction>
    <physiologicalReaction direction="left-to-right" evidence="3">
        <dbReference type="Rhea" id="RHEA:66285"/>
    </physiologicalReaction>
</comment>
<comment type="tissue specificity">
    <text evidence="3">Expressed in roots, stems and leaves.</text>
</comment>
<comment type="induction">
    <text evidence="3">Down-regulated after wounding.</text>
</comment>
<comment type="similarity">
    <text evidence="5">Belongs to the UDP-glycosyltransferase family.</text>
</comment>
<name>GT4A_SOLAA</name>
<evidence type="ECO:0000250" key="1">
    <source>
        <dbReference type="UniProtKB" id="A0A0A1HA03"/>
    </source>
</evidence>
<evidence type="ECO:0000250" key="2">
    <source>
        <dbReference type="UniProtKB" id="P51094"/>
    </source>
</evidence>
<evidence type="ECO:0000269" key="3">
    <source>
    </source>
</evidence>
<evidence type="ECO:0000303" key="4">
    <source>
    </source>
</evidence>
<evidence type="ECO:0000305" key="5"/>
<organism>
    <name type="scientific">Solanum aculeatissimum</name>
    <name type="common">Dutch eggplant</name>
    <name type="synonym">Solanum khasianum</name>
    <dbReference type="NCBI Taxonomy" id="267265"/>
    <lineage>
        <taxon>Eukaryota</taxon>
        <taxon>Viridiplantae</taxon>
        <taxon>Streptophyta</taxon>
        <taxon>Embryophyta</taxon>
        <taxon>Tracheophyta</taxon>
        <taxon>Spermatophyta</taxon>
        <taxon>Magnoliopsida</taxon>
        <taxon>eudicotyledons</taxon>
        <taxon>Gunneridae</taxon>
        <taxon>Pentapetalae</taxon>
        <taxon>asterids</taxon>
        <taxon>lamiids</taxon>
        <taxon>Solanales</taxon>
        <taxon>Solanaceae</taxon>
        <taxon>Solanoideae</taxon>
        <taxon>Solaneae</taxon>
        <taxon>Solanum</taxon>
    </lineage>
</organism>
<protein>
    <recommendedName>
        <fullName evidence="5">Nuatigenin 3-beta-glucosyltransferase</fullName>
        <ecNumber evidence="3">2.4.1.192</ecNumber>
    </recommendedName>
    <alternativeName>
        <fullName evidence="4">Glycosyltransferase 4A</fullName>
        <shortName evidence="4">SaGT4A</shortName>
    </alternativeName>
</protein>
<keyword id="KW-0328">Glycosyltransferase</keyword>
<keyword id="KW-0808">Transferase</keyword>
<proteinExistence type="evidence at protein level"/>
<feature type="chain" id="PRO_0000452210" description="Nuatigenin 3-beta-glucosyltransferase">
    <location>
        <begin position="1"/>
        <end position="491"/>
    </location>
</feature>
<feature type="active site" description="Proton acceptor" evidence="1">
    <location>
        <position position="20"/>
    </location>
</feature>
<feature type="active site" description="Charge relay" evidence="1">
    <location>
        <position position="125"/>
    </location>
</feature>
<feature type="binding site" evidence="2">
    <location>
        <position position="20"/>
    </location>
    <ligand>
        <name>an anthocyanidin</name>
        <dbReference type="ChEBI" id="CHEBI:143576"/>
    </ligand>
</feature>
<feature type="binding site" evidence="1">
    <location>
        <position position="352"/>
    </location>
    <ligand>
        <name>UDP-alpha-D-glucose</name>
        <dbReference type="ChEBI" id="CHEBI:58885"/>
    </ligand>
</feature>
<feature type="binding site" evidence="1">
    <location>
        <position position="354"/>
    </location>
    <ligand>
        <name>UDP-alpha-D-glucose</name>
        <dbReference type="ChEBI" id="CHEBI:58885"/>
    </ligand>
</feature>
<feature type="binding site" evidence="1">
    <location>
        <position position="369"/>
    </location>
    <ligand>
        <name>UDP-alpha-D-glucose</name>
        <dbReference type="ChEBI" id="CHEBI:58885"/>
    </ligand>
</feature>
<feature type="binding site" evidence="1">
    <location>
        <position position="372"/>
    </location>
    <ligand>
        <name>UDP-alpha-D-glucose</name>
        <dbReference type="ChEBI" id="CHEBI:58885"/>
    </ligand>
</feature>
<feature type="binding site" evidence="1">
    <location>
        <position position="373"/>
    </location>
    <ligand>
        <name>UDP-alpha-D-glucose</name>
        <dbReference type="ChEBI" id="CHEBI:58885"/>
    </ligand>
</feature>
<feature type="binding site" evidence="1">
    <location>
        <position position="374"/>
    </location>
    <ligand>
        <name>UDP-alpha-D-glucose</name>
        <dbReference type="ChEBI" id="CHEBI:58885"/>
    </ligand>
</feature>
<feature type="binding site" evidence="1">
    <location>
        <position position="377"/>
    </location>
    <ligand>
        <name>UDP-alpha-D-glucose</name>
        <dbReference type="ChEBI" id="CHEBI:58885"/>
    </ligand>
</feature>
<feature type="binding site" evidence="2">
    <location>
        <position position="392"/>
    </location>
    <ligand>
        <name>an anthocyanidin</name>
        <dbReference type="ChEBI" id="CHEBI:143576"/>
    </ligand>
</feature>
<feature type="binding site" evidence="1">
    <location>
        <position position="393"/>
    </location>
    <ligand>
        <name>UDP-alpha-D-glucose</name>
        <dbReference type="ChEBI" id="CHEBI:58885"/>
    </ligand>
</feature>
<feature type="binding site" evidence="1">
    <location>
        <position position="394"/>
    </location>
    <ligand>
        <name>UDP-alpha-D-glucose</name>
        <dbReference type="ChEBI" id="CHEBI:58885"/>
    </ligand>
</feature>
<sequence>MDNGSNQLHVLFLPYFATGHIIPLVNAARLFVFHAGVKVTILTTHHNASLFRSTIDNDVEDGHSVISIHTLRFPSTEVGLPEGIENFSSASSPELAGKVFYAIYLLQKPMEDKIREIHPDCIFSDMYLPWTVNIALELKIPRLLFNQSSYMYNSILYNLRLYKPHKSKTITSTDSISVPGLPDKIEFKLSQLTDDLIKPEDEKNAFDELLDRTRESEDRSYGIVHDTFYELEPAYADYYQKVKKTKCWQIGPISHFSSKLFRRKELINAVDESNSCAIVEWLNEQEHKSVLYVSFGSVVRFPEAQLTEIAKALEASSIPFIWVVKKDQSAETTCLLEEEKLKNKGLIIRGWAPQLTILDHSAVGGFMTHCGWNSILEAIIAGVPLVTWPVFAEQFYNEKLVEVMGLGVKVGAEVHESNGGVEISSLVIESEKIKEAIEKLMDDSKESQKIREKVIGMSEMAKNAVEEGGSSWNNLTALIDDIKNFTSTTNV</sequence>
<accession>Q5H861</accession>
<gene>
    <name evidence="4" type="primary">GT4A</name>
</gene>
<reference key="1">
    <citation type="journal article" date="2005" name="Plant Mol. Biol.">
        <title>A novel glucosyltransferase involved in steroid saponin biosynthesis in Solanum aculeatissimum.</title>
        <authorList>
            <person name="Kohara A."/>
            <person name="Nakajima C."/>
            <person name="Hashimoto K."/>
            <person name="Ikenaga T."/>
            <person name="Tanaka H."/>
            <person name="Shoyama Y."/>
            <person name="Yoshida S."/>
            <person name="Muranaka T."/>
        </authorList>
    </citation>
    <scope>NUCLEOTIDE SEQUENCE [MRNA]</scope>
    <scope>FUNCTION</scope>
    <scope>CATALYTIC ACTIVITY</scope>
    <scope>TISSUE SPECIFICITY</scope>
    <scope>INDUCTION</scope>
</reference>
<dbReference type="EC" id="2.4.1.192" evidence="3"/>
<dbReference type="EMBL" id="AB182385">
    <property type="protein sequence ID" value="BAD89042.1"/>
    <property type="molecule type" value="mRNA"/>
</dbReference>
<dbReference type="SMR" id="Q5H861"/>
<dbReference type="CAZy" id="GT1">
    <property type="family name" value="Glycosyltransferase Family 1"/>
</dbReference>
<dbReference type="BioCyc" id="MetaCyc:MONOMER18C3-13"/>
<dbReference type="GO" id="GO:0047248">
    <property type="term" value="F:nuatigenin 3-beta-glucosyltransferase activity"/>
    <property type="evidence" value="ECO:0007669"/>
    <property type="project" value="UniProtKB-EC"/>
</dbReference>
<dbReference type="GO" id="GO:0035251">
    <property type="term" value="F:UDP-glucosyltransferase activity"/>
    <property type="evidence" value="ECO:0000314"/>
    <property type="project" value="UniProtKB"/>
</dbReference>
<dbReference type="GO" id="GO:0016135">
    <property type="term" value="P:saponin biosynthetic process"/>
    <property type="evidence" value="ECO:0000314"/>
    <property type="project" value="UniProtKB"/>
</dbReference>
<dbReference type="CDD" id="cd03784">
    <property type="entry name" value="GT1_Gtf-like"/>
    <property type="match status" value="1"/>
</dbReference>
<dbReference type="FunFam" id="3.40.50.2000:FF:000154">
    <property type="entry name" value="Glycosyltransferase"/>
    <property type="match status" value="1"/>
</dbReference>
<dbReference type="Gene3D" id="3.40.50.2000">
    <property type="entry name" value="Glycogen Phosphorylase B"/>
    <property type="match status" value="2"/>
</dbReference>
<dbReference type="InterPro" id="IPR002213">
    <property type="entry name" value="UDP_glucos_trans"/>
</dbReference>
<dbReference type="InterPro" id="IPR035595">
    <property type="entry name" value="UDP_glycos_trans_CS"/>
</dbReference>
<dbReference type="PANTHER" id="PTHR48047">
    <property type="entry name" value="GLYCOSYLTRANSFERASE"/>
    <property type="match status" value="1"/>
</dbReference>
<dbReference type="PANTHER" id="PTHR48047:SF150">
    <property type="entry name" value="SOLANIDINE UDP-GLUCOSE GLUCOSYLTRANSFERASE 1"/>
    <property type="match status" value="1"/>
</dbReference>
<dbReference type="Pfam" id="PF00201">
    <property type="entry name" value="UDPGT"/>
    <property type="match status" value="1"/>
</dbReference>
<dbReference type="SUPFAM" id="SSF53756">
    <property type="entry name" value="UDP-Glycosyltransferase/glycogen phosphorylase"/>
    <property type="match status" value="1"/>
</dbReference>
<dbReference type="PROSITE" id="PS00375">
    <property type="entry name" value="UDPGT"/>
    <property type="match status" value="1"/>
</dbReference>